<organism>
    <name type="scientific">Aspergillus oryzae (strain ATCC 42149 / RIB 40)</name>
    <name type="common">Yellow koji mold</name>
    <dbReference type="NCBI Taxonomy" id="510516"/>
    <lineage>
        <taxon>Eukaryota</taxon>
        <taxon>Fungi</taxon>
        <taxon>Dikarya</taxon>
        <taxon>Ascomycota</taxon>
        <taxon>Pezizomycotina</taxon>
        <taxon>Eurotiomycetes</taxon>
        <taxon>Eurotiomycetidae</taxon>
        <taxon>Eurotiales</taxon>
        <taxon>Aspergillaceae</taxon>
        <taxon>Aspergillus</taxon>
        <taxon>Aspergillus subgen. Circumdati</taxon>
    </lineage>
</organism>
<keyword id="KW-0256">Endoplasmic reticulum</keyword>
<keyword id="KW-0378">Hydrolase</keyword>
<keyword id="KW-0472">Membrane</keyword>
<keyword id="KW-0645">Protease</keyword>
<keyword id="KW-1185">Reference proteome</keyword>
<keyword id="KW-0735">Signal-anchor</keyword>
<keyword id="KW-0812">Transmembrane</keyword>
<keyword id="KW-1133">Transmembrane helix</keyword>
<dbReference type="EC" id="3.4.21.89" evidence="1"/>
<dbReference type="EMBL" id="BA000052">
    <property type="protein sequence ID" value="BAE60952.1"/>
    <property type="molecule type" value="Genomic_DNA"/>
</dbReference>
<dbReference type="RefSeq" id="XP_001727791.1">
    <property type="nucleotide sequence ID" value="XM_001727739.2"/>
</dbReference>
<dbReference type="SMR" id="Q2UBW3"/>
<dbReference type="STRING" id="510516.Q2UBW3"/>
<dbReference type="MEROPS" id="S26.010"/>
<dbReference type="EnsemblFungi" id="BAE60952">
    <property type="protein sequence ID" value="BAE60952"/>
    <property type="gene ID" value="AO090012000838"/>
</dbReference>
<dbReference type="GeneID" id="5988265"/>
<dbReference type="KEGG" id="aor:AO090012000838"/>
<dbReference type="VEuPathDB" id="FungiDB:AO090012000838"/>
<dbReference type="HOGENOM" id="CLU_089996_0_0_1"/>
<dbReference type="OMA" id="ILMNEYP"/>
<dbReference type="OrthoDB" id="54181at5052"/>
<dbReference type="Proteomes" id="UP000006564">
    <property type="component" value="Chromosome 4"/>
</dbReference>
<dbReference type="GO" id="GO:0005787">
    <property type="term" value="C:signal peptidase complex"/>
    <property type="evidence" value="ECO:0007669"/>
    <property type="project" value="EnsemblFungi"/>
</dbReference>
<dbReference type="GO" id="GO:0004252">
    <property type="term" value="F:serine-type endopeptidase activity"/>
    <property type="evidence" value="ECO:0007669"/>
    <property type="project" value="UniProtKB-EC"/>
</dbReference>
<dbReference type="GO" id="GO:0045047">
    <property type="term" value="P:protein targeting to ER"/>
    <property type="evidence" value="ECO:0007669"/>
    <property type="project" value="EnsemblFungi"/>
</dbReference>
<dbReference type="GO" id="GO:0006465">
    <property type="term" value="P:signal peptide processing"/>
    <property type="evidence" value="ECO:0007669"/>
    <property type="project" value="EnsemblFungi"/>
</dbReference>
<dbReference type="CDD" id="cd06462">
    <property type="entry name" value="Peptidase_S24_S26"/>
    <property type="match status" value="1"/>
</dbReference>
<dbReference type="InterPro" id="IPR036286">
    <property type="entry name" value="LexA/Signal_pep-like_sf"/>
</dbReference>
<dbReference type="InterPro" id="IPR019756">
    <property type="entry name" value="Pept_S26A_signal_pept_1_Ser-AS"/>
</dbReference>
<dbReference type="InterPro" id="IPR001733">
    <property type="entry name" value="Peptidase_S26B"/>
</dbReference>
<dbReference type="NCBIfam" id="TIGR02228">
    <property type="entry name" value="sigpep_I_arch"/>
    <property type="match status" value="1"/>
</dbReference>
<dbReference type="PANTHER" id="PTHR10806">
    <property type="entry name" value="SIGNAL PEPTIDASE COMPLEX CATALYTIC SUBUNIT SEC11"/>
    <property type="match status" value="1"/>
</dbReference>
<dbReference type="PANTHER" id="PTHR10806:SF6">
    <property type="entry name" value="SIGNAL PEPTIDASE COMPLEX CATALYTIC SUBUNIT SEC11"/>
    <property type="match status" value="1"/>
</dbReference>
<dbReference type="PRINTS" id="PR00728">
    <property type="entry name" value="SIGNALPTASE"/>
</dbReference>
<dbReference type="SUPFAM" id="SSF51306">
    <property type="entry name" value="LexA/Signal peptidase"/>
    <property type="match status" value="1"/>
</dbReference>
<dbReference type="PROSITE" id="PS00501">
    <property type="entry name" value="SPASE_I_1"/>
    <property type="match status" value="1"/>
</dbReference>
<evidence type="ECO:0000250" key="1">
    <source>
        <dbReference type="UniProtKB" id="P15367"/>
    </source>
</evidence>
<evidence type="ECO:0000250" key="2">
    <source>
        <dbReference type="UniProtKB" id="P67812"/>
    </source>
</evidence>
<evidence type="ECO:0000255" key="3"/>
<evidence type="ECO:0000305" key="4"/>
<protein>
    <recommendedName>
        <fullName>Signal peptidase complex catalytic subunit sec11</fullName>
        <ecNumber evidence="1">3.4.21.89</ecNumber>
    </recommendedName>
    <alternativeName>
        <fullName>Signal peptidase I</fullName>
    </alternativeName>
</protein>
<name>SEC11_ASPOR</name>
<proteinExistence type="inferred from homology"/>
<gene>
    <name type="primary">sec11</name>
    <name type="ORF">AO090012000838</name>
</gene>
<feature type="chain" id="PRO_0000412317" description="Signal peptidase complex catalytic subunit sec11">
    <location>
        <begin position="1"/>
        <end position="191"/>
    </location>
</feature>
<feature type="topological domain" description="Cytoplasmic" evidence="3">
    <location>
        <begin position="1"/>
        <end position="18"/>
    </location>
</feature>
<feature type="transmembrane region" description="Helical; Signal-anchor for type II membrane protein" evidence="3">
    <location>
        <begin position="19"/>
        <end position="39"/>
    </location>
</feature>
<feature type="topological domain" description="Lumenal" evidence="3">
    <location>
        <begin position="40"/>
        <end position="191"/>
    </location>
</feature>
<feature type="region of interest" description="C-terminal short (CTS) helix" evidence="2">
    <location>
        <begin position="177"/>
        <end position="188"/>
    </location>
</feature>
<feature type="active site" description="Charge relay system" evidence="1">
    <location>
        <position position="53"/>
    </location>
</feature>
<feature type="active site" description="Charge relay system" evidence="1">
    <location>
        <position position="92"/>
    </location>
</feature>
<feature type="active site" description="Charge relay system" evidence="1">
    <location>
        <position position="133"/>
    </location>
</feature>
<sequence>MLSFLSSNLSNVRQSLAQVLNFALVLSTAFMMWKGLSVFTASSSPVVVVLSGSMEPAFQRGDLLFLWNRSPRAEVGEIVVYNVRGKDIPIVHRVVRTFPEIEGKTKKVKEISESSPIPNNMLLTKGDNNVADDVELYARGQDYLNREEDIVGSVRGYIPMVGYVTILLSEYPWLKTALLGIMGLMVMLQRE</sequence>
<comment type="function">
    <text evidence="1 2">Catalytic component of the signal peptidase complex (SPC) which catalyzes the cleavage of N-terminal signal sequences from nascent proteins as they are translocated into the lumen of the endoplasmic reticulum (By similarity). Specifically cleaves N-terminal signal peptides that contain a hydrophobic alpha-helix (h-region) shorter than 18-20 amino acids (By similarity).</text>
</comment>
<comment type="catalytic activity">
    <reaction evidence="1">
        <text>Cleavage of hydrophobic, N-terminal signal or leader sequences from secreted and periplasmic proteins.</text>
        <dbReference type="EC" id="3.4.21.89"/>
    </reaction>
</comment>
<comment type="subunit">
    <text evidence="1 2">Component of the signal peptidase complex (SPC) composed of a catalytic subunit SEC11 and three accessory subunits SPC1, SPC2 and SPC3 (By similarity). The complex induces a local thinning of the ER membrane which is used to measure the length of the signal peptide (SP) h-region of protein substrates. This ensures the selectivity of the complex towards h-regions shorter than 18-20 amino acids (By similarity). SPC associates with the translocon complex (By similarity).</text>
</comment>
<comment type="subcellular location">
    <subcellularLocation>
        <location evidence="1">Endoplasmic reticulum membrane</location>
        <topology evidence="1">Single-pass type II membrane protein</topology>
    </subcellularLocation>
</comment>
<comment type="domain">
    <text evidence="2">The C-terminal short (CTS) helix is essential for catalytic activity. It may be accommodated as a transmembrane helix in the thinned membrane environment of the complex, similarly to the signal peptide in the complex substrates.</text>
</comment>
<comment type="similarity">
    <text evidence="4">Belongs to the peptidase S26B family.</text>
</comment>
<reference key="1">
    <citation type="journal article" date="2005" name="Nature">
        <title>Genome sequencing and analysis of Aspergillus oryzae.</title>
        <authorList>
            <person name="Machida M."/>
            <person name="Asai K."/>
            <person name="Sano M."/>
            <person name="Tanaka T."/>
            <person name="Kumagai T."/>
            <person name="Terai G."/>
            <person name="Kusumoto K."/>
            <person name="Arima T."/>
            <person name="Akita O."/>
            <person name="Kashiwagi Y."/>
            <person name="Abe K."/>
            <person name="Gomi K."/>
            <person name="Horiuchi H."/>
            <person name="Kitamoto K."/>
            <person name="Kobayashi T."/>
            <person name="Takeuchi M."/>
            <person name="Denning D.W."/>
            <person name="Galagan J.E."/>
            <person name="Nierman W.C."/>
            <person name="Yu J."/>
            <person name="Archer D.B."/>
            <person name="Bennett J.W."/>
            <person name="Bhatnagar D."/>
            <person name="Cleveland T.E."/>
            <person name="Fedorova N.D."/>
            <person name="Gotoh O."/>
            <person name="Horikawa H."/>
            <person name="Hosoyama A."/>
            <person name="Ichinomiya M."/>
            <person name="Igarashi R."/>
            <person name="Iwashita K."/>
            <person name="Juvvadi P.R."/>
            <person name="Kato M."/>
            <person name="Kato Y."/>
            <person name="Kin T."/>
            <person name="Kokubun A."/>
            <person name="Maeda H."/>
            <person name="Maeyama N."/>
            <person name="Maruyama J."/>
            <person name="Nagasaki H."/>
            <person name="Nakajima T."/>
            <person name="Oda K."/>
            <person name="Okada K."/>
            <person name="Paulsen I."/>
            <person name="Sakamoto K."/>
            <person name="Sawano T."/>
            <person name="Takahashi M."/>
            <person name="Takase K."/>
            <person name="Terabayashi Y."/>
            <person name="Wortman J.R."/>
            <person name="Yamada O."/>
            <person name="Yamagata Y."/>
            <person name="Anazawa H."/>
            <person name="Hata Y."/>
            <person name="Koide Y."/>
            <person name="Komori T."/>
            <person name="Koyama Y."/>
            <person name="Minetoki T."/>
            <person name="Suharnan S."/>
            <person name="Tanaka A."/>
            <person name="Isono K."/>
            <person name="Kuhara S."/>
            <person name="Ogasawara N."/>
            <person name="Kikuchi H."/>
        </authorList>
    </citation>
    <scope>NUCLEOTIDE SEQUENCE [LARGE SCALE GENOMIC DNA]</scope>
    <source>
        <strain>ATCC 42149 / RIB 40</strain>
    </source>
</reference>
<accession>Q2UBW3</accession>